<evidence type="ECO:0000250" key="1"/>
<evidence type="ECO:0000250" key="2">
    <source>
        <dbReference type="UniProtKB" id="P86716"/>
    </source>
</evidence>
<evidence type="ECO:0000255" key="3"/>
<evidence type="ECO:0000255" key="4">
    <source>
        <dbReference type="PROSITE-ProRule" id="PRU01208"/>
    </source>
</evidence>
<evidence type="ECO:0000269" key="5">
    <source>
    </source>
</evidence>
<evidence type="ECO:0000303" key="6">
    <source>
    </source>
</evidence>
<evidence type="ECO:0000305" key="7"/>
<evidence type="ECO:0000305" key="8">
    <source>
    </source>
</evidence>
<evidence type="ECO:0000312" key="9">
    <source>
        <dbReference type="EMBL" id="AHG24516.1"/>
    </source>
</evidence>
<accession>P83288</accession>
<accession>W0LP48</accession>
<reference key="1">
    <citation type="journal article" date="2014" name="FEBS Lett.">
        <title>Genes and evolution of two-domain toxins from lynx spider venom.</title>
        <authorList>
            <person name="Sachkova M.Y."/>
            <person name="Slavokhotova A.A."/>
            <person name="Grishin E.V."/>
            <person name="Vassilevski A.A."/>
        </authorList>
    </citation>
    <scope>NUCLEOTIDE SEQUENCE [MRNA]</scope>
    <source>
        <tissue>Venom gland</tissue>
    </source>
</reference>
<reference key="2">
    <citation type="journal article" date="2002" name="J. Biol. Chem.">
        <title>Oxyopinins, large amphipathic peptides isolated from the venom of the wolf spider Oxyopes kitabensis with cytolytic properties and positive insecticidal cooperativity with spider neurotoxins.</title>
        <authorList>
            <person name="Corzo G."/>
            <person name="Villegas E."/>
            <person name="Gomez-Lagunas F."/>
            <person name="Possani L.D."/>
            <person name="Belokoneva O.S."/>
            <person name="Nakajima T."/>
        </authorList>
    </citation>
    <scope>PROTEIN SEQUENCE OF 55-123</scope>
    <scope>FUNCTION</scope>
    <scope>SUBCELLULAR LOCATION</scope>
    <scope>TOXIC DOSE</scope>
    <scope>MASS SPECTROMETRY</scope>
    <scope>CIRCULAR DICHROISM ANALYSIS</scope>
    <source>
        <tissue>Venom</tissue>
    </source>
</reference>
<organism>
    <name type="scientific">Oxyopes takobius</name>
    <name type="common">Lynx spider</name>
    <name type="synonym">Oxyopes foliiformis</name>
    <dbReference type="NCBI Taxonomy" id="666126"/>
    <lineage>
        <taxon>Eukaryota</taxon>
        <taxon>Metazoa</taxon>
        <taxon>Ecdysozoa</taxon>
        <taxon>Arthropoda</taxon>
        <taxon>Chelicerata</taxon>
        <taxon>Arachnida</taxon>
        <taxon>Araneae</taxon>
        <taxon>Araneomorphae</taxon>
        <taxon>Entelegynae</taxon>
        <taxon>Lycosoidea</taxon>
        <taxon>Oxyopidae</taxon>
        <taxon>Oxyopes</taxon>
    </lineage>
</organism>
<feature type="signal peptide" evidence="3">
    <location>
        <begin position="1"/>
        <end position="16"/>
    </location>
</feature>
<feature type="propeptide" id="PRO_0000444424" evidence="5">
    <location>
        <begin position="17"/>
        <end position="54"/>
    </location>
</feature>
<feature type="chain" id="PRO_0000087676" description="Omega-oxotoxin-Ot1a" evidence="5">
    <location>
        <begin position="55"/>
        <end position="123"/>
    </location>
</feature>
<feature type="domain" description="Oxytoxin-type inhibitor cystine knot (ICK)" evidence="4">
    <location>
        <begin position="55"/>
        <end position="122"/>
    </location>
</feature>
<feature type="disulfide bond" evidence="2">
    <location>
        <begin position="58"/>
        <end position="72"/>
    </location>
</feature>
<feature type="disulfide bond" evidence="2">
    <location>
        <begin position="65"/>
        <end position="77"/>
    </location>
</feature>
<feature type="disulfide bond" evidence="2">
    <location>
        <begin position="69"/>
        <end position="118"/>
    </location>
</feature>
<feature type="disulfide bond" evidence="2">
    <location>
        <begin position="71"/>
        <end position="106"/>
    </location>
</feature>
<feature type="disulfide bond" evidence="2">
    <location>
        <begin position="79"/>
        <end position="104"/>
    </location>
</feature>
<keyword id="KW-0108">Calcium channel impairing toxin</keyword>
<keyword id="KW-0903">Direct protein sequencing</keyword>
<keyword id="KW-1015">Disulfide bond</keyword>
<keyword id="KW-0872">Ion channel impairing toxin</keyword>
<keyword id="KW-0960">Knottin</keyword>
<keyword id="KW-0528">Neurotoxin</keyword>
<keyword id="KW-0964">Secreted</keyword>
<keyword id="KW-0732">Signal</keyword>
<keyword id="KW-0800">Toxin</keyword>
<keyword id="KW-1218">Voltage-gated calcium channel impairing toxin</keyword>
<comment type="function">
    <text evidence="1 5">Weak blocker of vertebrate P/Q-, N- and L-type voltage-gated calcium channels (Cav1 and Cav2) (By similarity). Is both paralytic and lethal when injected into lepidopteran larvae. Is not toxic to mice.</text>
</comment>
<comment type="subcellular location">
    <subcellularLocation>
        <location evidence="5">Secreted</location>
    </subcellularLocation>
</comment>
<comment type="tissue specificity">
    <text evidence="8">Expressed by the venom gland.</text>
</comment>
<comment type="domain">
    <text evidence="7">The presence of a 'disulfide through disulfide knot' structurally defines this protein as a knottin.</text>
</comment>
<comment type="PTM">
    <text>Mass spectrometry data suggest a carboxylated free C-terminal residue.</text>
</comment>
<comment type="mass spectrometry" mass="8059.25" method="MALDI" evidence="5"/>
<comment type="toxic dose">
    <text evidence="5">LD(50) is 5.1 +- 0.5 nmol/g on lepidopteran larvae (Spodoptera litura).</text>
</comment>
<comment type="miscellaneous">
    <text>The primary structure of the mature peptide is identical to that of omega-oxotoxin-Ol1a from Oxyopes lineatus (AC P0C8M0).</text>
</comment>
<comment type="similarity">
    <text evidence="7">Belongs to the spiderine family. Spiderine subfamily.</text>
</comment>
<sequence length="123" mass="14065">MKIVLVFVCTLYLAQATYLSEQDVNEVSEFLEALDQANEAASEMVEAAETEEARDWECLPLHSSCDNDCVCCKNHHCHCPYSNVSKLEKWLPEWAKIPDALKRCSCQRNDKDGKINTCDKYKN</sequence>
<proteinExistence type="evidence at protein level"/>
<name>TOX1_OXYTA</name>
<protein>
    <recommendedName>
        <fullName>Omega-oxotoxin-Ot1a</fullName>
        <shortName>Omega-OXTX-Ot1a</shortName>
    </recommendedName>
    <alternativeName>
        <fullName evidence="6">Oxytoxin-1</fullName>
        <shortName evidence="6">OxyTx1</shortName>
    </alternativeName>
    <alternativeName>
        <fullName evidence="9">Tx-1</fullName>
    </alternativeName>
</protein>
<dbReference type="EMBL" id="KF766562">
    <property type="protein sequence ID" value="AHG24516.1"/>
    <property type="molecule type" value="mRNA"/>
</dbReference>
<dbReference type="SMR" id="P83288"/>
<dbReference type="ArachnoServer" id="AS000779">
    <property type="toxin name" value="omega-oxotoxin-Ot1a"/>
</dbReference>
<dbReference type="GO" id="GO:0005576">
    <property type="term" value="C:extracellular region"/>
    <property type="evidence" value="ECO:0007669"/>
    <property type="project" value="UniProtKB-SubCell"/>
</dbReference>
<dbReference type="GO" id="GO:0005246">
    <property type="term" value="F:calcium channel regulator activity"/>
    <property type="evidence" value="ECO:0007669"/>
    <property type="project" value="UniProtKB-KW"/>
</dbReference>
<dbReference type="GO" id="GO:0090729">
    <property type="term" value="F:toxin activity"/>
    <property type="evidence" value="ECO:0007669"/>
    <property type="project" value="UniProtKB-KW"/>
</dbReference>
<dbReference type="InterPro" id="IPR044061">
    <property type="entry name" value="OXYTX_ICK"/>
</dbReference>
<dbReference type="PROSITE" id="PS51861">
    <property type="entry name" value="OXYTX_ICK"/>
    <property type="match status" value="1"/>
</dbReference>